<feature type="chain" id="PRO_0000326894" description="Protoheme IX farnesyltransferase">
    <location>
        <begin position="1"/>
        <end position="296"/>
    </location>
</feature>
<feature type="topological domain" description="Cytoplasmic" evidence="1">
    <location>
        <begin position="1"/>
        <end position="9"/>
    </location>
</feature>
<feature type="transmembrane region" description="Helical" evidence="1">
    <location>
        <begin position="10"/>
        <end position="28"/>
    </location>
</feature>
<feature type="topological domain" description="Periplasmic" evidence="1">
    <location>
        <begin position="29"/>
        <end position="37"/>
    </location>
</feature>
<feature type="transmembrane region" description="Helical" evidence="1">
    <location>
        <begin position="38"/>
        <end position="56"/>
    </location>
</feature>
<feature type="topological domain" description="Cytoplasmic" evidence="1">
    <location>
        <begin position="57"/>
        <end position="78"/>
    </location>
</feature>
<feature type="transmembrane region" description="Helical" evidence="1">
    <location>
        <begin position="79"/>
        <end position="97"/>
    </location>
</feature>
<feature type="topological domain" description="Periplasmic" evidence="1">
    <location>
        <begin position="98"/>
        <end position="107"/>
    </location>
</feature>
<feature type="transmembrane region" description="Helical" evidence="1">
    <location>
        <begin position="108"/>
        <end position="126"/>
    </location>
</feature>
<feature type="topological domain" description="Cytoplasmic" evidence="1">
    <location>
        <begin position="127"/>
        <end position="197"/>
    </location>
</feature>
<feature type="transmembrane region" description="Helical" evidence="1">
    <location>
        <begin position="198"/>
        <end position="216"/>
    </location>
</feature>
<feature type="topological domain" description="Periplasmic" evidence="1">
    <location>
        <begin position="217"/>
        <end position="228"/>
    </location>
</feature>
<feature type="transmembrane region" description="Helical" evidence="1">
    <location>
        <begin position="229"/>
        <end position="247"/>
    </location>
</feature>
<feature type="topological domain" description="Cytoplasmic" evidence="1">
    <location>
        <begin position="248"/>
        <end position="268"/>
    </location>
</feature>
<feature type="transmembrane region" description="Helical" evidence="1">
    <location>
        <begin position="269"/>
        <end position="287"/>
    </location>
</feature>
<feature type="topological domain" description="Periplasmic" evidence="1">
    <location>
        <begin position="288"/>
        <end position="296"/>
    </location>
</feature>
<name>CYOE_ECOL5</name>
<evidence type="ECO:0000255" key="1">
    <source>
        <dbReference type="HAMAP-Rule" id="MF_00154"/>
    </source>
</evidence>
<dbReference type="EC" id="2.5.1.141" evidence="1"/>
<dbReference type="EMBL" id="CP000247">
    <property type="protein sequence ID" value="ABG68517.1"/>
    <property type="molecule type" value="Genomic_DNA"/>
</dbReference>
<dbReference type="RefSeq" id="WP_000576425.1">
    <property type="nucleotide sequence ID" value="NC_008253.1"/>
</dbReference>
<dbReference type="SMR" id="Q0TKL4"/>
<dbReference type="KEGG" id="ecp:ECP_0488"/>
<dbReference type="HOGENOM" id="CLU_029631_0_0_6"/>
<dbReference type="UniPathway" id="UPA00834">
    <property type="reaction ID" value="UER00712"/>
</dbReference>
<dbReference type="Proteomes" id="UP000009182">
    <property type="component" value="Chromosome"/>
</dbReference>
<dbReference type="GO" id="GO:0005886">
    <property type="term" value="C:plasma membrane"/>
    <property type="evidence" value="ECO:0007669"/>
    <property type="project" value="UniProtKB-SubCell"/>
</dbReference>
<dbReference type="GO" id="GO:0008495">
    <property type="term" value="F:protoheme IX farnesyltransferase activity"/>
    <property type="evidence" value="ECO:0007669"/>
    <property type="project" value="UniProtKB-UniRule"/>
</dbReference>
<dbReference type="GO" id="GO:0048034">
    <property type="term" value="P:heme O biosynthetic process"/>
    <property type="evidence" value="ECO:0007669"/>
    <property type="project" value="UniProtKB-UniRule"/>
</dbReference>
<dbReference type="CDD" id="cd13957">
    <property type="entry name" value="PT_UbiA_Cox10"/>
    <property type="match status" value="1"/>
</dbReference>
<dbReference type="FunFam" id="1.10.357.140:FF:000001">
    <property type="entry name" value="Protoheme IX farnesyltransferase"/>
    <property type="match status" value="1"/>
</dbReference>
<dbReference type="Gene3D" id="1.10.357.140">
    <property type="entry name" value="UbiA prenyltransferase"/>
    <property type="match status" value="1"/>
</dbReference>
<dbReference type="HAMAP" id="MF_00154">
    <property type="entry name" value="CyoE_CtaB"/>
    <property type="match status" value="1"/>
</dbReference>
<dbReference type="InterPro" id="IPR006369">
    <property type="entry name" value="Protohaem_IX_farnesylTrfase"/>
</dbReference>
<dbReference type="InterPro" id="IPR000537">
    <property type="entry name" value="UbiA_prenyltransferase"/>
</dbReference>
<dbReference type="InterPro" id="IPR030470">
    <property type="entry name" value="UbiA_prenylTrfase_CS"/>
</dbReference>
<dbReference type="InterPro" id="IPR044878">
    <property type="entry name" value="UbiA_sf"/>
</dbReference>
<dbReference type="NCBIfam" id="TIGR01473">
    <property type="entry name" value="cyoE_ctaB"/>
    <property type="match status" value="1"/>
</dbReference>
<dbReference type="NCBIfam" id="NF003348">
    <property type="entry name" value="PRK04375.1-1"/>
    <property type="match status" value="1"/>
</dbReference>
<dbReference type="PANTHER" id="PTHR43448">
    <property type="entry name" value="PROTOHEME IX FARNESYLTRANSFERASE, MITOCHONDRIAL"/>
    <property type="match status" value="1"/>
</dbReference>
<dbReference type="PANTHER" id="PTHR43448:SF2">
    <property type="entry name" value="PROTOHEME IX FARNESYLTRANSFERASE, MITOCHONDRIAL"/>
    <property type="match status" value="1"/>
</dbReference>
<dbReference type="Pfam" id="PF01040">
    <property type="entry name" value="UbiA"/>
    <property type="match status" value="1"/>
</dbReference>
<dbReference type="PROSITE" id="PS00943">
    <property type="entry name" value="UBIA"/>
    <property type="match status" value="1"/>
</dbReference>
<accession>Q0TKL4</accession>
<protein>
    <recommendedName>
        <fullName evidence="1">Protoheme IX farnesyltransferase</fullName>
        <ecNumber evidence="1">2.5.1.141</ecNumber>
    </recommendedName>
    <alternativeName>
        <fullName evidence="1">Heme B farnesyltransferase</fullName>
    </alternativeName>
    <alternativeName>
        <fullName evidence="1">Heme O synthase</fullName>
    </alternativeName>
</protein>
<organism>
    <name type="scientific">Escherichia coli O6:K15:H31 (strain 536 / UPEC)</name>
    <dbReference type="NCBI Taxonomy" id="362663"/>
    <lineage>
        <taxon>Bacteria</taxon>
        <taxon>Pseudomonadati</taxon>
        <taxon>Pseudomonadota</taxon>
        <taxon>Gammaproteobacteria</taxon>
        <taxon>Enterobacterales</taxon>
        <taxon>Enterobacteriaceae</taxon>
        <taxon>Escherichia</taxon>
    </lineage>
</organism>
<proteinExistence type="inferred from homology"/>
<gene>
    <name evidence="1" type="primary">cyoE</name>
    <name type="ordered locus">ECP_0488</name>
</gene>
<sequence length="296" mass="32230">MIFKQYLQVTKPGIIFGNLISVIGGFLLASKGSIDYPLFIYTLVGVSLVVASGCVFNNYIDRDIDRKMERTKNRVLVKGLISPAVSLVYATLLGIAGFMLLWFGANPLACWLGVMGFVVYVGVYSLYMKRHSVYGTLIGSLSGAAPPVIGYCAVTGEFDSGAAILLAIFSLWQMPHSYAIAIFRFKDYQAANIPVLPVVKGISVAKNHITLYIIAFAVATLMLSLGGYAGYKYLVVAAAVSVWWLGMALRGYKVADDRIWARKLFGFSIIAITALSVMMSVDFMVPDSHTLLAAVW</sequence>
<keyword id="KW-0997">Cell inner membrane</keyword>
<keyword id="KW-1003">Cell membrane</keyword>
<keyword id="KW-0350">Heme biosynthesis</keyword>
<keyword id="KW-0472">Membrane</keyword>
<keyword id="KW-0808">Transferase</keyword>
<keyword id="KW-0812">Transmembrane</keyword>
<keyword id="KW-1133">Transmembrane helix</keyword>
<reference key="1">
    <citation type="journal article" date="2006" name="Mol. Microbiol.">
        <title>Role of pathogenicity island-associated integrases in the genome plasticity of uropathogenic Escherichia coli strain 536.</title>
        <authorList>
            <person name="Hochhut B."/>
            <person name="Wilde C."/>
            <person name="Balling G."/>
            <person name="Middendorf B."/>
            <person name="Dobrindt U."/>
            <person name="Brzuszkiewicz E."/>
            <person name="Gottschalk G."/>
            <person name="Carniel E."/>
            <person name="Hacker J."/>
        </authorList>
    </citation>
    <scope>NUCLEOTIDE SEQUENCE [LARGE SCALE GENOMIC DNA]</scope>
    <source>
        <strain>536 / UPEC</strain>
    </source>
</reference>
<comment type="function">
    <text evidence="1">Converts heme B (protoheme IX) to heme O by substitution of the vinyl group on carbon 2 of heme B porphyrin ring with a hydroxyethyl farnesyl side group.</text>
</comment>
<comment type="catalytic activity">
    <reaction evidence="1">
        <text>heme b + (2E,6E)-farnesyl diphosphate + H2O = Fe(II)-heme o + diphosphate</text>
        <dbReference type="Rhea" id="RHEA:28070"/>
        <dbReference type="ChEBI" id="CHEBI:15377"/>
        <dbReference type="ChEBI" id="CHEBI:33019"/>
        <dbReference type="ChEBI" id="CHEBI:60344"/>
        <dbReference type="ChEBI" id="CHEBI:60530"/>
        <dbReference type="ChEBI" id="CHEBI:175763"/>
        <dbReference type="EC" id="2.5.1.141"/>
    </reaction>
</comment>
<comment type="pathway">
    <text evidence="1">Porphyrin-containing compound metabolism; heme O biosynthesis; heme O from protoheme: step 1/1.</text>
</comment>
<comment type="subcellular location">
    <subcellularLocation>
        <location evidence="1">Cell inner membrane</location>
        <topology evidence="1">Multi-pass membrane protein</topology>
    </subcellularLocation>
</comment>
<comment type="miscellaneous">
    <text evidence="1">Carbon 2 of the heme B porphyrin ring is defined according to the Fischer nomenclature.</text>
</comment>
<comment type="similarity">
    <text evidence="1">Belongs to the UbiA prenyltransferase family. Protoheme IX farnesyltransferase subfamily.</text>
</comment>